<dbReference type="EMBL" id="EU117376">
    <property type="protein sequence ID" value="ABV66166.1"/>
    <property type="molecule type" value="Genomic_DNA"/>
</dbReference>
<dbReference type="RefSeq" id="YP_001718449.1">
    <property type="nucleotide sequence ID" value="NC_010433.1"/>
</dbReference>
<dbReference type="SMR" id="B1NWG2"/>
<dbReference type="GeneID" id="6000061"/>
<dbReference type="KEGG" id="mesc:6000061"/>
<dbReference type="OrthoDB" id="815100at2759"/>
<dbReference type="GO" id="GO:0009706">
    <property type="term" value="C:chloroplast inner membrane"/>
    <property type="evidence" value="ECO:0007669"/>
    <property type="project" value="UniProtKB-SubCell"/>
</dbReference>
<dbReference type="GO" id="GO:0015297">
    <property type="term" value="F:antiporter activity"/>
    <property type="evidence" value="ECO:0007669"/>
    <property type="project" value="UniProtKB-KW"/>
</dbReference>
<dbReference type="GO" id="GO:0015078">
    <property type="term" value="F:proton transmembrane transporter activity"/>
    <property type="evidence" value="ECO:0007669"/>
    <property type="project" value="UniProtKB-UniRule"/>
</dbReference>
<dbReference type="GO" id="GO:0006813">
    <property type="term" value="P:potassium ion transport"/>
    <property type="evidence" value="ECO:0007669"/>
    <property type="project" value="UniProtKB-UniRule"/>
</dbReference>
<dbReference type="HAMAP" id="MF_01308">
    <property type="entry name" value="CemA_PxcA"/>
    <property type="match status" value="1"/>
</dbReference>
<dbReference type="InterPro" id="IPR004282">
    <property type="entry name" value="CemA"/>
</dbReference>
<dbReference type="PANTHER" id="PTHR33650:SF2">
    <property type="entry name" value="CHLOROPLAST ENVELOPE MEMBRANE PROTEIN"/>
    <property type="match status" value="1"/>
</dbReference>
<dbReference type="PANTHER" id="PTHR33650">
    <property type="entry name" value="CHLOROPLAST ENVELOPE MEMBRANE PROTEIN-RELATED"/>
    <property type="match status" value="1"/>
</dbReference>
<dbReference type="Pfam" id="PF03040">
    <property type="entry name" value="CemA"/>
    <property type="match status" value="1"/>
</dbReference>
<sequence length="231" mass="27307">MKKWKKKTFIPLLYLTSIVFLPWWVSFLFNKSLESWIINCCNTSKSETFLNDIQEKSILEKFMELEDLVRLNEIIKEYPETHLQKFRIGIHKETIQLIKMHNEDRIHTILHFSTNIICFIILSGYSILSNEELIILNSWVQEFLYNLSDTIKAFSILLLTDLCIGFHSPHGWELMIGSVYKDFGFAHNDQIISGLVSTFPVILDTIFKYWIFRYLNRVSPSLVVIYHSMND</sequence>
<organism>
    <name type="scientific">Manihot esculenta</name>
    <name type="common">Cassava</name>
    <name type="synonym">Jatropha manihot</name>
    <dbReference type="NCBI Taxonomy" id="3983"/>
    <lineage>
        <taxon>Eukaryota</taxon>
        <taxon>Viridiplantae</taxon>
        <taxon>Streptophyta</taxon>
        <taxon>Embryophyta</taxon>
        <taxon>Tracheophyta</taxon>
        <taxon>Spermatophyta</taxon>
        <taxon>Magnoliopsida</taxon>
        <taxon>eudicotyledons</taxon>
        <taxon>Gunneridae</taxon>
        <taxon>Pentapetalae</taxon>
        <taxon>rosids</taxon>
        <taxon>fabids</taxon>
        <taxon>Malpighiales</taxon>
        <taxon>Euphorbiaceae</taxon>
        <taxon>Crotonoideae</taxon>
        <taxon>Manihoteae</taxon>
        <taxon>Manihot</taxon>
    </lineage>
</organism>
<gene>
    <name evidence="1" type="primary">cemA</name>
</gene>
<proteinExistence type="inferred from homology"/>
<geneLocation type="chloroplast"/>
<name>CEMA_MANES</name>
<keyword id="KW-0050">Antiport</keyword>
<keyword id="KW-0150">Chloroplast</keyword>
<keyword id="KW-0375">Hydrogen ion transport</keyword>
<keyword id="KW-0406">Ion transport</keyword>
<keyword id="KW-0472">Membrane</keyword>
<keyword id="KW-0934">Plastid</keyword>
<keyword id="KW-1001">Plastid inner membrane</keyword>
<keyword id="KW-0630">Potassium</keyword>
<keyword id="KW-0633">Potassium transport</keyword>
<keyword id="KW-0812">Transmembrane</keyword>
<keyword id="KW-1133">Transmembrane helix</keyword>
<keyword id="KW-0813">Transport</keyword>
<feature type="chain" id="PRO_0000346543" description="Potassium/proton antiporter CemA">
    <location>
        <begin position="1"/>
        <end position="231"/>
    </location>
</feature>
<feature type="transmembrane region" description="Helical" evidence="1">
    <location>
        <begin position="9"/>
        <end position="29"/>
    </location>
</feature>
<feature type="transmembrane region" description="Helical" evidence="1">
    <location>
        <begin position="116"/>
        <end position="136"/>
    </location>
</feature>
<feature type="transmembrane region" description="Helical" evidence="1">
    <location>
        <begin position="191"/>
        <end position="211"/>
    </location>
</feature>
<evidence type="ECO:0000255" key="1">
    <source>
        <dbReference type="HAMAP-Rule" id="MF_01308"/>
    </source>
</evidence>
<evidence type="ECO:0000305" key="2"/>
<accession>B1NWG2</accession>
<reference key="1">
    <citation type="journal article" date="2008" name="Theor. Appl. Genet.">
        <title>The complete nucleotide sequence of the cassava (Manihot esculenta) chloroplast genome and the evolution of atpF in Malpighiales: RNA editing and multiple losses of a group II intron.</title>
        <authorList>
            <person name="Daniell H."/>
            <person name="Wurdack K.J."/>
            <person name="Kanagaraj A."/>
            <person name="Lee S.-B."/>
            <person name="Saski C."/>
            <person name="Jansen R.K."/>
        </authorList>
    </citation>
    <scope>NUCLEOTIDE SEQUENCE [LARGE SCALE GENOMIC DNA]</scope>
    <source>
        <strain>cv. TME3</strain>
    </source>
</reference>
<protein>
    <recommendedName>
        <fullName evidence="1">Potassium/proton antiporter CemA</fullName>
    </recommendedName>
    <alternativeName>
        <fullName evidence="1">Chloroplast envelope membrane protein A</fullName>
        <shortName evidence="1">CemA</shortName>
    </alternativeName>
</protein>
<comment type="function">
    <text evidence="1">Contributes to K(+)/H(+) antiport activity by supporting proton efflux to control proton extrusion and homeostasis in chloroplasts in a light-dependent manner to modulate photosynthesis. Prevents excessive induction of non-photochemical quenching (NPQ) under continuous-light conditions. Indirectly promotes efficient inorganic carbon uptake into chloroplasts.</text>
</comment>
<comment type="catalytic activity">
    <reaction evidence="1">
        <text>K(+)(in) + H(+)(out) = K(+)(out) + H(+)(in)</text>
        <dbReference type="Rhea" id="RHEA:29467"/>
        <dbReference type="ChEBI" id="CHEBI:15378"/>
        <dbReference type="ChEBI" id="CHEBI:29103"/>
    </reaction>
</comment>
<comment type="subcellular location">
    <subcellularLocation>
        <location evidence="1">Plastid</location>
        <location evidence="1">Chloroplast inner membrane</location>
        <topology evidence="1">Multi-pass membrane protein</topology>
    </subcellularLocation>
</comment>
<comment type="similarity">
    <text evidence="1 2">Belongs to the CemA family.</text>
</comment>